<comment type="function">
    <text evidence="1">NDH shuttles electrons from NAD(P)H:plastoquinone, via FMN and iron-sulfur (Fe-S) centers, to quinones in the photosynthetic chain and possibly in a chloroplast respiratory chain. The immediate electron acceptor for the enzyme in this species is believed to be plastoquinone. Couples the redox reaction to proton translocation, and thus conserves the redox energy in a proton gradient.</text>
</comment>
<comment type="catalytic activity">
    <reaction evidence="1">
        <text>a plastoquinone + NADH + (n+1) H(+)(in) = a plastoquinol + NAD(+) + n H(+)(out)</text>
        <dbReference type="Rhea" id="RHEA:42608"/>
        <dbReference type="Rhea" id="RHEA-COMP:9561"/>
        <dbReference type="Rhea" id="RHEA-COMP:9562"/>
        <dbReference type="ChEBI" id="CHEBI:15378"/>
        <dbReference type="ChEBI" id="CHEBI:17757"/>
        <dbReference type="ChEBI" id="CHEBI:57540"/>
        <dbReference type="ChEBI" id="CHEBI:57945"/>
        <dbReference type="ChEBI" id="CHEBI:62192"/>
    </reaction>
</comment>
<comment type="catalytic activity">
    <reaction evidence="1">
        <text>a plastoquinone + NADPH + (n+1) H(+)(in) = a plastoquinol + NADP(+) + n H(+)(out)</text>
        <dbReference type="Rhea" id="RHEA:42612"/>
        <dbReference type="Rhea" id="RHEA-COMP:9561"/>
        <dbReference type="Rhea" id="RHEA-COMP:9562"/>
        <dbReference type="ChEBI" id="CHEBI:15378"/>
        <dbReference type="ChEBI" id="CHEBI:17757"/>
        <dbReference type="ChEBI" id="CHEBI:57783"/>
        <dbReference type="ChEBI" id="CHEBI:58349"/>
        <dbReference type="ChEBI" id="CHEBI:62192"/>
    </reaction>
</comment>
<comment type="cofactor">
    <cofactor evidence="1">
        <name>[4Fe-4S] cluster</name>
        <dbReference type="ChEBI" id="CHEBI:49883"/>
    </cofactor>
    <text evidence="1">Binds 2 [4Fe-4S] clusters per subunit.</text>
</comment>
<comment type="subunit">
    <text evidence="1">NDH is composed of at least 16 different subunits, 5 of which are encoded in the nucleus.</text>
</comment>
<comment type="subcellular location">
    <subcellularLocation>
        <location evidence="1">Plastid</location>
        <location evidence="1">Chloroplast thylakoid membrane</location>
        <topology evidence="1">Peripheral membrane protein</topology>
    </subcellularLocation>
</comment>
<comment type="similarity">
    <text evidence="1">Belongs to the complex I 23 kDa subunit family.</text>
</comment>
<dbReference type="EC" id="7.1.1.-" evidence="1"/>
<dbReference type="EMBL" id="DQ886273">
    <property type="protein sequence ID" value="ABH88132.1"/>
    <property type="molecule type" value="Genomic_DNA"/>
</dbReference>
<dbReference type="EMBL" id="EU196765">
    <property type="protein sequence ID" value="ABW22814.1"/>
    <property type="molecule type" value="Genomic_DNA"/>
</dbReference>
<dbReference type="RefSeq" id="YP_001122851.1">
    <property type="nucleotide sequence ID" value="NC_009259.1"/>
</dbReference>
<dbReference type="SMR" id="A4GGF0"/>
<dbReference type="GeneID" id="4961782"/>
<dbReference type="KEGG" id="pvu:4961782"/>
<dbReference type="GO" id="GO:0009535">
    <property type="term" value="C:chloroplast thylakoid membrane"/>
    <property type="evidence" value="ECO:0007669"/>
    <property type="project" value="UniProtKB-SubCell"/>
</dbReference>
<dbReference type="GO" id="GO:0051539">
    <property type="term" value="F:4 iron, 4 sulfur cluster binding"/>
    <property type="evidence" value="ECO:0007669"/>
    <property type="project" value="UniProtKB-KW"/>
</dbReference>
<dbReference type="GO" id="GO:0005506">
    <property type="term" value="F:iron ion binding"/>
    <property type="evidence" value="ECO:0007669"/>
    <property type="project" value="UniProtKB-UniRule"/>
</dbReference>
<dbReference type="GO" id="GO:0008137">
    <property type="term" value="F:NADH dehydrogenase (ubiquinone) activity"/>
    <property type="evidence" value="ECO:0007669"/>
    <property type="project" value="InterPro"/>
</dbReference>
<dbReference type="GO" id="GO:0048038">
    <property type="term" value="F:quinone binding"/>
    <property type="evidence" value="ECO:0007669"/>
    <property type="project" value="UniProtKB-KW"/>
</dbReference>
<dbReference type="GO" id="GO:0019684">
    <property type="term" value="P:photosynthesis, light reaction"/>
    <property type="evidence" value="ECO:0007669"/>
    <property type="project" value="UniProtKB-UniRule"/>
</dbReference>
<dbReference type="FunFam" id="3.30.70.3270:FF:000006">
    <property type="entry name" value="NAD(P)H-quinone oxidoreductase subunit I, chloroplastic"/>
    <property type="match status" value="1"/>
</dbReference>
<dbReference type="Gene3D" id="3.30.70.3270">
    <property type="match status" value="1"/>
</dbReference>
<dbReference type="HAMAP" id="MF_01351">
    <property type="entry name" value="NDH1_NuoI"/>
    <property type="match status" value="1"/>
</dbReference>
<dbReference type="InterPro" id="IPR017896">
    <property type="entry name" value="4Fe4S_Fe-S-bd"/>
</dbReference>
<dbReference type="InterPro" id="IPR017900">
    <property type="entry name" value="4Fe4S_Fe_S_CS"/>
</dbReference>
<dbReference type="InterPro" id="IPR010226">
    <property type="entry name" value="NADH_quinone_OxRdtase_chainI"/>
</dbReference>
<dbReference type="InterPro" id="IPR004497">
    <property type="entry name" value="NDHI"/>
</dbReference>
<dbReference type="NCBIfam" id="TIGR00403">
    <property type="entry name" value="ndhI"/>
    <property type="match status" value="1"/>
</dbReference>
<dbReference type="NCBIfam" id="TIGR01971">
    <property type="entry name" value="NuoI"/>
    <property type="match status" value="1"/>
</dbReference>
<dbReference type="NCBIfam" id="NF004537">
    <property type="entry name" value="PRK05888.1-3"/>
    <property type="match status" value="1"/>
</dbReference>
<dbReference type="PANTHER" id="PTHR47275">
    <property type="entry name" value="NAD(P)H-QUINONE OXIDOREDUCTASE SUBUNIT I, CHLOROPLASTIC"/>
    <property type="match status" value="1"/>
</dbReference>
<dbReference type="PANTHER" id="PTHR47275:SF1">
    <property type="entry name" value="NAD(P)H-QUINONE OXIDOREDUCTASE SUBUNIT I, CHLOROPLASTIC"/>
    <property type="match status" value="1"/>
</dbReference>
<dbReference type="Pfam" id="PF00037">
    <property type="entry name" value="Fer4"/>
    <property type="match status" value="2"/>
</dbReference>
<dbReference type="SUPFAM" id="SSF54862">
    <property type="entry name" value="4Fe-4S ferredoxins"/>
    <property type="match status" value="1"/>
</dbReference>
<dbReference type="PROSITE" id="PS00198">
    <property type="entry name" value="4FE4S_FER_1"/>
    <property type="match status" value="2"/>
</dbReference>
<dbReference type="PROSITE" id="PS51379">
    <property type="entry name" value="4FE4S_FER_2"/>
    <property type="match status" value="2"/>
</dbReference>
<geneLocation type="chloroplast"/>
<keyword id="KW-0004">4Fe-4S</keyword>
<keyword id="KW-0150">Chloroplast</keyword>
<keyword id="KW-0408">Iron</keyword>
<keyword id="KW-0411">Iron-sulfur</keyword>
<keyword id="KW-0472">Membrane</keyword>
<keyword id="KW-0479">Metal-binding</keyword>
<keyword id="KW-0520">NAD</keyword>
<keyword id="KW-0521">NADP</keyword>
<keyword id="KW-0934">Plastid</keyword>
<keyword id="KW-0618">Plastoquinone</keyword>
<keyword id="KW-0874">Quinone</keyword>
<keyword id="KW-0677">Repeat</keyword>
<keyword id="KW-0793">Thylakoid</keyword>
<keyword id="KW-1278">Translocase</keyword>
<proteinExistence type="inferred from homology"/>
<feature type="chain" id="PRO_0000298584" description="NAD(P)H-quinone oxidoreductase subunit I, chloroplastic">
    <location>
        <begin position="1"/>
        <end position="161"/>
    </location>
</feature>
<feature type="domain" description="4Fe-4S ferredoxin-type 1" evidence="1">
    <location>
        <begin position="55"/>
        <end position="84"/>
    </location>
</feature>
<feature type="domain" description="4Fe-4S ferredoxin-type 2" evidence="1">
    <location>
        <begin position="95"/>
        <end position="124"/>
    </location>
</feature>
<feature type="binding site" evidence="1">
    <location>
        <position position="64"/>
    </location>
    <ligand>
        <name>[4Fe-4S] cluster</name>
        <dbReference type="ChEBI" id="CHEBI:49883"/>
        <label>1</label>
    </ligand>
</feature>
<feature type="binding site" evidence="1">
    <location>
        <position position="67"/>
    </location>
    <ligand>
        <name>[4Fe-4S] cluster</name>
        <dbReference type="ChEBI" id="CHEBI:49883"/>
        <label>1</label>
    </ligand>
</feature>
<feature type="binding site" evidence="1">
    <location>
        <position position="70"/>
    </location>
    <ligand>
        <name>[4Fe-4S] cluster</name>
        <dbReference type="ChEBI" id="CHEBI:49883"/>
        <label>1</label>
    </ligand>
</feature>
<feature type="binding site" evidence="1">
    <location>
        <position position="74"/>
    </location>
    <ligand>
        <name>[4Fe-4S] cluster</name>
        <dbReference type="ChEBI" id="CHEBI:49883"/>
        <label>2</label>
    </ligand>
</feature>
<feature type="binding site" evidence="1">
    <location>
        <position position="104"/>
    </location>
    <ligand>
        <name>[4Fe-4S] cluster</name>
        <dbReference type="ChEBI" id="CHEBI:49883"/>
        <label>2</label>
    </ligand>
</feature>
<feature type="binding site" evidence="1">
    <location>
        <position position="107"/>
    </location>
    <ligand>
        <name>[4Fe-4S] cluster</name>
        <dbReference type="ChEBI" id="CHEBI:49883"/>
        <label>2</label>
    </ligand>
</feature>
<feature type="binding site" evidence="1">
    <location>
        <position position="110"/>
    </location>
    <ligand>
        <name>[4Fe-4S] cluster</name>
        <dbReference type="ChEBI" id="CHEBI:49883"/>
        <label>2</label>
    </ligand>
</feature>
<feature type="binding site" evidence="1">
    <location>
        <position position="114"/>
    </location>
    <ligand>
        <name>[4Fe-4S] cluster</name>
        <dbReference type="ChEBI" id="CHEBI:49883"/>
        <label>1</label>
    </ligand>
</feature>
<reference key="1">
    <citation type="journal article" date="2007" name="BMC Genomics">
        <title>Rapid evolutionary change of common bean (Phaseolus vulgaris L) plastome, and the genomic diversification of legume chloroplasts.</title>
        <authorList>
            <person name="Guo X."/>
            <person name="Castillo-Ramirez S."/>
            <person name="Gonzalez V."/>
            <person name="Bustos P."/>
            <person name="Fernandez-Vazquez J.L."/>
            <person name="Santamaria R.I."/>
            <person name="Arellano J."/>
            <person name="Cevallos M.A."/>
            <person name="Davila G."/>
        </authorList>
    </citation>
    <scope>NUCLEOTIDE SEQUENCE [LARGE SCALE GENOMIC DNA]</scope>
    <source>
        <strain>cv. Negro Jamapa</strain>
    </source>
</reference>
<reference key="2">
    <citation type="submission" date="2007-10" db="EMBL/GenBank/DDBJ databases">
        <title>Complete nucleotide sequence of the plastid genome of the common bean, Phaseolus vulgaris.</title>
        <authorList>
            <person name="Moore M.J."/>
            <person name="Triplett E.W."/>
            <person name="Broughton W.J."/>
            <person name="Soltis P.S."/>
            <person name="Soltis D.E."/>
        </authorList>
    </citation>
    <scope>NUCLEOTIDE SEQUENCE [LARGE SCALE GENOMIC DNA]</scope>
</reference>
<name>NDHI_PHAVU</name>
<evidence type="ECO:0000255" key="1">
    <source>
        <dbReference type="HAMAP-Rule" id="MF_01351"/>
    </source>
</evidence>
<sequence length="161" mass="18909">MFLMVTEFINYSEQIIRAARYIGQGLMITLSHANRLPVTIQYPYEKIISSERFRGRIHFEFDKCIACEVCVRVCPIDLPIVDWKLETDIRKKRLLNYSIDFGICIFCGNCIEYCPTNCLSMTEEYELSTYDRHELNYNLIALGRLPVSVIDDYTIRTIQIK</sequence>
<organism>
    <name type="scientific">Phaseolus vulgaris</name>
    <name type="common">Kidney bean</name>
    <name type="synonym">French bean</name>
    <dbReference type="NCBI Taxonomy" id="3885"/>
    <lineage>
        <taxon>Eukaryota</taxon>
        <taxon>Viridiplantae</taxon>
        <taxon>Streptophyta</taxon>
        <taxon>Embryophyta</taxon>
        <taxon>Tracheophyta</taxon>
        <taxon>Spermatophyta</taxon>
        <taxon>Magnoliopsida</taxon>
        <taxon>eudicotyledons</taxon>
        <taxon>Gunneridae</taxon>
        <taxon>Pentapetalae</taxon>
        <taxon>rosids</taxon>
        <taxon>fabids</taxon>
        <taxon>Fabales</taxon>
        <taxon>Fabaceae</taxon>
        <taxon>Papilionoideae</taxon>
        <taxon>50 kb inversion clade</taxon>
        <taxon>NPAAA clade</taxon>
        <taxon>indigoferoid/millettioid clade</taxon>
        <taxon>Phaseoleae</taxon>
        <taxon>Phaseolus</taxon>
    </lineage>
</organism>
<accession>A4GGF0</accession>
<accession>A8W844</accession>
<protein>
    <recommendedName>
        <fullName evidence="1">NAD(P)H-quinone oxidoreductase subunit I, chloroplastic</fullName>
        <ecNumber evidence="1">7.1.1.-</ecNumber>
    </recommendedName>
    <alternativeName>
        <fullName evidence="1">NAD(P)H dehydrogenase subunit I</fullName>
        <shortName evidence="1">NDH subunit I</shortName>
    </alternativeName>
    <alternativeName>
        <fullName evidence="1">NADH-plastoquinone oxidoreductase subunit I</fullName>
    </alternativeName>
</protein>
<gene>
    <name evidence="1" type="primary">ndhI</name>
</gene>